<feature type="chain" id="PRO_0000078022" description="Uncharacterized protein HI_1292">
    <location>
        <begin position="1"/>
        <end position="261"/>
    </location>
</feature>
<dbReference type="EMBL" id="L42023">
    <property type="protein sequence ID" value="AAC22948.1"/>
    <property type="molecule type" value="Genomic_DNA"/>
</dbReference>
<dbReference type="PIR" id="A64025">
    <property type="entry name" value="A64025"/>
</dbReference>
<dbReference type="RefSeq" id="NP_439444.1">
    <property type="nucleotide sequence ID" value="NC_000907.1"/>
</dbReference>
<dbReference type="STRING" id="71421.HI_1292"/>
<dbReference type="EnsemblBacteria" id="AAC22948">
    <property type="protein sequence ID" value="AAC22948"/>
    <property type="gene ID" value="HI_1292"/>
</dbReference>
<dbReference type="KEGG" id="hin:HI_1292"/>
<dbReference type="PATRIC" id="fig|71421.8.peg.1344"/>
<dbReference type="eggNOG" id="COG5595">
    <property type="taxonomic scope" value="Bacteria"/>
</dbReference>
<dbReference type="HOGENOM" id="CLU_1064102_0_0_6"/>
<dbReference type="OrthoDB" id="5589102at2"/>
<dbReference type="PhylomeDB" id="P44154"/>
<dbReference type="BioCyc" id="HINF71421:G1GJ1-1318-MONOMER"/>
<dbReference type="Proteomes" id="UP000000579">
    <property type="component" value="Chromosome"/>
</dbReference>
<dbReference type="InterPro" id="IPR016908">
    <property type="entry name" value="UCP029037"/>
</dbReference>
<dbReference type="Pfam" id="PF10071">
    <property type="entry name" value="DUF2310"/>
    <property type="match status" value="1"/>
</dbReference>
<dbReference type="PIRSF" id="PIRSF029037">
    <property type="entry name" value="UCP029037_Zn_ribbon"/>
    <property type="match status" value="1"/>
</dbReference>
<sequence>MYLIETYFRLTALENNIESQSRLLNAVIDQWRYNGQIIGREIPLYLAEEDGAQGFAMRVICPEQDSLFPQNNNAEVNRALQEAEKCGVIFDGFQLVGDDFNSDQTAENASPAWQVLYTTHLQSCSPIHSGENFAPIPLYKQLKNQPHLTQDLIKWQENWQACDQLQMNGAVLEQQSLAEISDHQSTLSKHGRYLAQEIEKETGIPTYYYLYRVGGQSLKSEKSRCCPSCGANWALKDAIFDTFHFKCDTCRLVSNLSWNFL</sequence>
<reference key="1">
    <citation type="journal article" date="1995" name="Science">
        <title>Whole-genome random sequencing and assembly of Haemophilus influenzae Rd.</title>
        <authorList>
            <person name="Fleischmann R.D."/>
            <person name="Adams M.D."/>
            <person name="White O."/>
            <person name="Clayton R.A."/>
            <person name="Kirkness E.F."/>
            <person name="Kerlavage A.R."/>
            <person name="Bult C.J."/>
            <person name="Tomb J.-F."/>
            <person name="Dougherty B.A."/>
            <person name="Merrick J.M."/>
            <person name="McKenney K."/>
            <person name="Sutton G.G."/>
            <person name="FitzHugh W."/>
            <person name="Fields C.A."/>
            <person name="Gocayne J.D."/>
            <person name="Scott J.D."/>
            <person name="Shirley R."/>
            <person name="Liu L.-I."/>
            <person name="Glodek A."/>
            <person name="Kelley J.M."/>
            <person name="Weidman J.F."/>
            <person name="Phillips C.A."/>
            <person name="Spriggs T."/>
            <person name="Hedblom E."/>
            <person name="Cotton M.D."/>
            <person name="Utterback T.R."/>
            <person name="Hanna M.C."/>
            <person name="Nguyen D.T."/>
            <person name="Saudek D.M."/>
            <person name="Brandon R.C."/>
            <person name="Fine L.D."/>
            <person name="Fritchman J.L."/>
            <person name="Fuhrmann J.L."/>
            <person name="Geoghagen N.S.M."/>
            <person name="Gnehm C.L."/>
            <person name="McDonald L.A."/>
            <person name="Small K.V."/>
            <person name="Fraser C.M."/>
            <person name="Smith H.O."/>
            <person name="Venter J.C."/>
        </authorList>
    </citation>
    <scope>NUCLEOTIDE SEQUENCE [LARGE SCALE GENOMIC DNA]</scope>
    <source>
        <strain>ATCC 51907 / DSM 11121 / KW20 / Rd</strain>
    </source>
</reference>
<gene>
    <name type="ordered locus">HI_1292</name>
</gene>
<name>Y1292_HAEIN</name>
<proteinExistence type="predicted"/>
<keyword id="KW-1185">Reference proteome</keyword>
<organism>
    <name type="scientific">Haemophilus influenzae (strain ATCC 51907 / DSM 11121 / KW20 / Rd)</name>
    <dbReference type="NCBI Taxonomy" id="71421"/>
    <lineage>
        <taxon>Bacteria</taxon>
        <taxon>Pseudomonadati</taxon>
        <taxon>Pseudomonadota</taxon>
        <taxon>Gammaproteobacteria</taxon>
        <taxon>Pasteurellales</taxon>
        <taxon>Pasteurellaceae</taxon>
        <taxon>Haemophilus</taxon>
    </lineage>
</organism>
<accession>P44154</accession>
<protein>
    <recommendedName>
        <fullName>Uncharacterized protein HI_1292</fullName>
    </recommendedName>
</protein>